<name>PG027_MONPV</name>
<feature type="chain" id="PRO_0000457193" description="Interferon antagonist OPG027">
    <location>
        <begin position="1"/>
        <end position="150"/>
    </location>
</feature>
<reference key="1">
    <citation type="journal article" date="2022" name="J. Infect. Dis.">
        <title>Exportation of Monkeypox virus from the African continent.</title>
        <authorList>
            <person name="Mauldin M.R."/>
            <person name="McCollum A.M."/>
            <person name="Nakazawa Y.J."/>
            <person name="Mandra A."/>
            <person name="Whitehouse E.R."/>
            <person name="Davidson W."/>
            <person name="Zhao H."/>
            <person name="Gao J."/>
            <person name="Li Y."/>
            <person name="Doty J."/>
            <person name="Yinka-Ogunleye A."/>
            <person name="Akinpelu A."/>
            <person name="Aruna O."/>
            <person name="Naidoo D."/>
            <person name="Lewandowski K."/>
            <person name="Afrough B."/>
            <person name="Graham V."/>
            <person name="Aarons E."/>
            <person name="Hewson R."/>
            <person name="Vipond R."/>
            <person name="Dunning J."/>
            <person name="Chand M."/>
            <person name="Brown C."/>
            <person name="Cohen-Gihon I."/>
            <person name="Erez N."/>
            <person name="Shifman O."/>
            <person name="Israeli O."/>
            <person name="Sharon M."/>
            <person name="Schwartz E."/>
            <person name="Beth-Din A."/>
            <person name="Zvi A."/>
            <person name="Mak T.M."/>
            <person name="Ng Y.K."/>
            <person name="Cui L."/>
            <person name="Lin R.T.P."/>
            <person name="Olson V.A."/>
            <person name="Brooks T."/>
            <person name="Paran N."/>
            <person name="Ihekweazu C."/>
            <person name="Reynolds M.G."/>
        </authorList>
    </citation>
    <scope>NUCLEOTIDE SEQUENCE [LARGE SCALE GENOMIC DNA]</scope>
    <source>
        <strain>MPXV-M5312_HM12_Rivers</strain>
    </source>
</reference>
<keyword id="KW-0244">Early protein</keyword>
<keyword id="KW-0945">Host-virus interaction</keyword>
<keyword id="KW-1090">Inhibition of host innate immune response by virus</keyword>
<keyword id="KW-1185">Reference proteome</keyword>
<keyword id="KW-0899">Viral immunoevasion</keyword>
<organismHost>
    <name type="scientific">Cynomys gunnisoni</name>
    <name type="common">Gunnison's prairie dog</name>
    <name type="synonym">Spermophilus gunnisoni</name>
    <dbReference type="NCBI Taxonomy" id="45479"/>
</organismHost>
<organismHost>
    <name type="scientific">Cynomys leucurus</name>
    <name type="common">White-tailed prairie dog</name>
    <dbReference type="NCBI Taxonomy" id="99825"/>
</organismHost>
<organismHost>
    <name type="scientific">Cynomys ludovicianus</name>
    <name type="common">Black-tailed prairie dog</name>
    <dbReference type="NCBI Taxonomy" id="45480"/>
</organismHost>
<organismHost>
    <name type="scientific">Cynomys mexicanus</name>
    <name type="common">Mexican prairie dog</name>
    <dbReference type="NCBI Taxonomy" id="99826"/>
</organismHost>
<organismHost>
    <name type="scientific">Cynomys parvidens</name>
    <name type="common">Utah prairie dog</name>
    <dbReference type="NCBI Taxonomy" id="99827"/>
</organismHost>
<organismHost>
    <name type="scientific">Gliridae</name>
    <name type="common">dormice</name>
    <dbReference type="NCBI Taxonomy" id="30650"/>
</organismHost>
<organismHost>
    <name type="scientific">Heliosciurus ruwenzorii</name>
    <name type="common">Ruwenzori sun squirrel</name>
    <dbReference type="NCBI Taxonomy" id="226685"/>
</organismHost>
<organismHost>
    <name type="scientific">Homo sapiens</name>
    <name type="common">Human</name>
    <dbReference type="NCBI Taxonomy" id="9606"/>
</organismHost>
<organismHost>
    <name type="scientific">Mus musculus</name>
    <name type="common">Mouse</name>
    <dbReference type="NCBI Taxonomy" id="10090"/>
</organismHost>
<proteinExistence type="inferred from homology"/>
<sequence length="150" mass="18041">MGIQHEFDIIINGDIALRNLQLHRGDNYGCKLKIISNDYKKLKLRFIIRPDWSEIDEVKGLTVFANNYAVKVNKVDYTFYYVIYEAVIHLYNKKTEILIYSDDENELFKHYYPYISLNMISKKYKVKEENYSSPYIEHPLIPYRDYESMD</sequence>
<gene>
    <name type="primary">OPG027</name>
    <name type="synonym">D10L</name>
</gene>
<dbReference type="EMBL" id="MT903340">
    <property type="protein sequence ID" value="QNP12885.1"/>
    <property type="molecule type" value="Genomic_DNA"/>
</dbReference>
<dbReference type="RefSeq" id="YP_010377012.1">
    <property type="nucleotide sequence ID" value="NC_063383.1"/>
</dbReference>
<dbReference type="SMR" id="A0A7H0DN02"/>
<dbReference type="GeneID" id="72551427"/>
<dbReference type="Proteomes" id="UP000516359">
    <property type="component" value="Genome"/>
</dbReference>
<dbReference type="GO" id="GO:0052170">
    <property type="term" value="P:symbiont-mediated suppression of host innate immune response"/>
    <property type="evidence" value="ECO:0007669"/>
    <property type="project" value="UniProtKB-KW"/>
</dbReference>
<dbReference type="GO" id="GO:0016032">
    <property type="term" value="P:viral process"/>
    <property type="evidence" value="ECO:0007669"/>
    <property type="project" value="InterPro"/>
</dbReference>
<dbReference type="InterPro" id="IPR004967">
    <property type="entry name" value="Poxvirus_C7/F8A"/>
</dbReference>
<dbReference type="Pfam" id="PF03287">
    <property type="entry name" value="Pox_C7_F8A"/>
    <property type="match status" value="1"/>
</dbReference>
<dbReference type="PIRSF" id="PIRSF003779">
    <property type="entry name" value="VAC_C7L"/>
    <property type="match status" value="1"/>
</dbReference>
<protein>
    <recommendedName>
        <fullName>Interferon antagonist OPG027</fullName>
    </recommendedName>
    <alternativeName>
        <fullName>Host range protein 2</fullName>
    </alternativeName>
</protein>
<comment type="function">
    <text evidence="1">Inhibits antiviral activity induced by type I interferons. Does not block signal transduction of IFN, but is important to counteract the host antiviral state induced by a pre-treatment with IFN.</text>
</comment>
<comment type="induction">
    <text evidence="1">Expressed in the early phase of the viral replicative cycle.</text>
</comment>
<comment type="similarity">
    <text evidence="2">Belongs to the orthopoxvirus OPG027 family.</text>
</comment>
<evidence type="ECO:0000250" key="1">
    <source>
        <dbReference type="UniProtKB" id="P68600"/>
    </source>
</evidence>
<evidence type="ECO:0000305" key="2"/>
<organism>
    <name type="scientific">Monkeypox virus</name>
    <dbReference type="NCBI Taxonomy" id="10244"/>
    <lineage>
        <taxon>Viruses</taxon>
        <taxon>Varidnaviria</taxon>
        <taxon>Bamfordvirae</taxon>
        <taxon>Nucleocytoviricota</taxon>
        <taxon>Pokkesviricetes</taxon>
        <taxon>Chitovirales</taxon>
        <taxon>Poxviridae</taxon>
        <taxon>Chordopoxvirinae</taxon>
        <taxon>Orthopoxvirus</taxon>
    </lineage>
</organism>
<accession>A0A7H0DN02</accession>